<organism>
    <name type="scientific">Salmonella choleraesuis (strain SC-B67)</name>
    <dbReference type="NCBI Taxonomy" id="321314"/>
    <lineage>
        <taxon>Bacteria</taxon>
        <taxon>Pseudomonadati</taxon>
        <taxon>Pseudomonadota</taxon>
        <taxon>Gammaproteobacteria</taxon>
        <taxon>Enterobacterales</taxon>
        <taxon>Enterobacteriaceae</taxon>
        <taxon>Salmonella</taxon>
    </lineage>
</organism>
<gene>
    <name evidence="1" type="primary">yejL</name>
    <name type="ordered locus">SCH_2244</name>
</gene>
<sequence length="75" mass="8231">MPQLSRYSDEHVEQLLSELLSVLEKHKAPTDLSLMVLGNMVTNLINTSVAPAQRQAIANSFARALQSSISEDNAH</sequence>
<protein>
    <recommendedName>
        <fullName evidence="1">UPF0352 protein YejL</fullName>
    </recommendedName>
</protein>
<proteinExistence type="inferred from homology"/>
<dbReference type="EMBL" id="AE017220">
    <property type="protein sequence ID" value="AAX66150.1"/>
    <property type="molecule type" value="Genomic_DNA"/>
</dbReference>
<dbReference type="RefSeq" id="WP_001135904.1">
    <property type="nucleotide sequence ID" value="NC_006905.1"/>
</dbReference>
<dbReference type="SMR" id="Q57MB1"/>
<dbReference type="KEGG" id="sec:SCH_2244"/>
<dbReference type="HOGENOM" id="CLU_175457_0_0_6"/>
<dbReference type="Proteomes" id="UP000000538">
    <property type="component" value="Chromosome"/>
</dbReference>
<dbReference type="Gene3D" id="1.10.3390.10">
    <property type="entry name" value="YejL-like"/>
    <property type="match status" value="1"/>
</dbReference>
<dbReference type="HAMAP" id="MF_00816">
    <property type="entry name" value="UPF0352"/>
    <property type="match status" value="1"/>
</dbReference>
<dbReference type="InterPro" id="IPR009857">
    <property type="entry name" value="UPF0352"/>
</dbReference>
<dbReference type="InterPro" id="IPR023202">
    <property type="entry name" value="YejL_sf"/>
</dbReference>
<dbReference type="NCBIfam" id="NF010242">
    <property type="entry name" value="PRK13689.1"/>
    <property type="match status" value="1"/>
</dbReference>
<dbReference type="Pfam" id="PF07208">
    <property type="entry name" value="DUF1414"/>
    <property type="match status" value="1"/>
</dbReference>
<dbReference type="PIRSF" id="PIRSF006188">
    <property type="entry name" value="UCP006188"/>
    <property type="match status" value="1"/>
</dbReference>
<dbReference type="SUPFAM" id="SSF158651">
    <property type="entry name" value="YejL-like"/>
    <property type="match status" value="1"/>
</dbReference>
<reference key="1">
    <citation type="journal article" date="2005" name="Nucleic Acids Res.">
        <title>The genome sequence of Salmonella enterica serovar Choleraesuis, a highly invasive and resistant zoonotic pathogen.</title>
        <authorList>
            <person name="Chiu C.-H."/>
            <person name="Tang P."/>
            <person name="Chu C."/>
            <person name="Hu S."/>
            <person name="Bao Q."/>
            <person name="Yu J."/>
            <person name="Chou Y.-Y."/>
            <person name="Wang H.-S."/>
            <person name="Lee Y.-S."/>
        </authorList>
    </citation>
    <scope>NUCLEOTIDE SEQUENCE [LARGE SCALE GENOMIC DNA]</scope>
    <source>
        <strain>SC-B67</strain>
    </source>
</reference>
<name>YEJL_SALCH</name>
<accession>Q57MB1</accession>
<comment type="similarity">
    <text evidence="1">Belongs to the UPF0352 family.</text>
</comment>
<feature type="chain" id="PRO_0000201795" description="UPF0352 protein YejL">
    <location>
        <begin position="1"/>
        <end position="75"/>
    </location>
</feature>
<evidence type="ECO:0000255" key="1">
    <source>
        <dbReference type="HAMAP-Rule" id="MF_00816"/>
    </source>
</evidence>